<keyword id="KW-0210">Decarboxylase</keyword>
<keyword id="KW-0456">Lyase</keyword>
<keyword id="KW-0460">Magnesium</keyword>
<keyword id="KW-0479">Metal-binding</keyword>
<keyword id="KW-1185">Reference proteome</keyword>
<keyword id="KW-0786">Thiamine pyrophosphate</keyword>
<evidence type="ECO:0000250" key="1"/>
<evidence type="ECO:0000250" key="2">
    <source>
        <dbReference type="UniProtKB" id="P06169"/>
    </source>
</evidence>
<evidence type="ECO:0000305" key="3"/>
<proteinExistence type="inferred from homology"/>
<sequence length="569" mass="62999">MATDIATRELRKPVDVAEYLFRRLHEVGIRSVHGVPGDYNLAALDYLPKCGLHWVGNCNELNAGYAADGYARVNGISALITTFGVGELSAINAIAGAYSEFVPIVHIVGQPHTRSQRDGMLLHHTLGNGDYNVFARMNAGVSTTVGRLNDTHEVATLIDNAIRECWIRSRPVYITLPTDMVTKKIEGERLNTPIDLSLPANDPEKEDYVVDVVLKYLHAAQRPVILVDACAIRHKVLQEVHDLMEASGLPTFVAPMGKGAVDETHKNYGGVYAGDGSNTGVREQVESSDLILSIGAIKSDFNTAGFTYRIGQLNTIDFHSTYVRVRYSEYPDINMKGVLRKVIQKLGRVNAQPVPHLSNNLPDDEPKSGDQPITHRWFWPKIGQWLKENDIVITETGTANFGIWETRFPAGVTAISQVLWGSIGYSVGACQGAALAAKEQGNRRTILFVGDGSIQLTLQEISTMIRNKLNPIIFVICNEGYTIERYIHGWEASYNDIQQWDYKSLPVAFGAGKDYKGYRVKTKDDMIKLFENTEFASAPFLQLVELYMPREDAPSALKLTAEAAASRNK</sequence>
<reference key="1">
    <citation type="journal article" date="2005" name="Nature">
        <title>Genomic sequence of the pathogenic and allergenic filamentous fungus Aspergillus fumigatus.</title>
        <authorList>
            <person name="Nierman W.C."/>
            <person name="Pain A."/>
            <person name="Anderson M.J."/>
            <person name="Wortman J.R."/>
            <person name="Kim H.S."/>
            <person name="Arroyo J."/>
            <person name="Berriman M."/>
            <person name="Abe K."/>
            <person name="Archer D.B."/>
            <person name="Bermejo C."/>
            <person name="Bennett J.W."/>
            <person name="Bowyer P."/>
            <person name="Chen D."/>
            <person name="Collins M."/>
            <person name="Coulsen R."/>
            <person name="Davies R."/>
            <person name="Dyer P.S."/>
            <person name="Farman M.L."/>
            <person name="Fedorova N."/>
            <person name="Fedorova N.D."/>
            <person name="Feldblyum T.V."/>
            <person name="Fischer R."/>
            <person name="Fosker N."/>
            <person name="Fraser A."/>
            <person name="Garcia J.L."/>
            <person name="Garcia M.J."/>
            <person name="Goble A."/>
            <person name="Goldman G.H."/>
            <person name="Gomi K."/>
            <person name="Griffith-Jones S."/>
            <person name="Gwilliam R."/>
            <person name="Haas B.J."/>
            <person name="Haas H."/>
            <person name="Harris D.E."/>
            <person name="Horiuchi H."/>
            <person name="Huang J."/>
            <person name="Humphray S."/>
            <person name="Jimenez J."/>
            <person name="Keller N."/>
            <person name="Khouri H."/>
            <person name="Kitamoto K."/>
            <person name="Kobayashi T."/>
            <person name="Konzack S."/>
            <person name="Kulkarni R."/>
            <person name="Kumagai T."/>
            <person name="Lafton A."/>
            <person name="Latge J.-P."/>
            <person name="Li W."/>
            <person name="Lord A."/>
            <person name="Lu C."/>
            <person name="Majoros W.H."/>
            <person name="May G.S."/>
            <person name="Miller B.L."/>
            <person name="Mohamoud Y."/>
            <person name="Molina M."/>
            <person name="Monod M."/>
            <person name="Mouyna I."/>
            <person name="Mulligan S."/>
            <person name="Murphy L.D."/>
            <person name="O'Neil S."/>
            <person name="Paulsen I."/>
            <person name="Penalva M.A."/>
            <person name="Pertea M."/>
            <person name="Price C."/>
            <person name="Pritchard B.L."/>
            <person name="Quail M.A."/>
            <person name="Rabbinowitsch E."/>
            <person name="Rawlins N."/>
            <person name="Rajandream M.A."/>
            <person name="Reichard U."/>
            <person name="Renauld H."/>
            <person name="Robson G.D."/>
            <person name="Rodriguez de Cordoba S."/>
            <person name="Rodriguez-Pena J.M."/>
            <person name="Ronning C.M."/>
            <person name="Rutter S."/>
            <person name="Salzberg S.L."/>
            <person name="Sanchez M."/>
            <person name="Sanchez-Ferrero J.C."/>
            <person name="Saunders D."/>
            <person name="Seeger K."/>
            <person name="Squares R."/>
            <person name="Squares S."/>
            <person name="Takeuchi M."/>
            <person name="Tekaia F."/>
            <person name="Turner G."/>
            <person name="Vazquez de Aldana C.R."/>
            <person name="Weidman J."/>
            <person name="White O."/>
            <person name="Woodward J.R."/>
            <person name="Yu J.-H."/>
            <person name="Fraser C.M."/>
            <person name="Galagan J.E."/>
            <person name="Asai K."/>
            <person name="Machida M."/>
            <person name="Hall N."/>
            <person name="Barrell B.G."/>
            <person name="Denning D.W."/>
        </authorList>
    </citation>
    <scope>NUCLEOTIDE SEQUENCE [LARGE SCALE GENOMIC DNA]</scope>
    <source>
        <strain>ATCC MYA-4609 / CBS 101355 / FGSC A1100 / Af293</strain>
    </source>
</reference>
<feature type="chain" id="PRO_0000233113" description="Pyruvate decarboxylase">
    <location>
        <begin position="1"/>
        <end position="569"/>
    </location>
</feature>
<feature type="binding site" evidence="2">
    <location>
        <position position="38"/>
    </location>
    <ligand>
        <name>pyruvate</name>
        <dbReference type="ChEBI" id="CHEBI:15361"/>
        <note>ligand shared between two neighboring subunits</note>
    </ligand>
</feature>
<feature type="binding site" evidence="2">
    <location>
        <position position="124"/>
    </location>
    <ligand>
        <name>pyruvate</name>
        <dbReference type="ChEBI" id="CHEBI:15361"/>
        <note>ligand shared between two neighboring subunits</note>
    </ligand>
</feature>
<feature type="binding site" evidence="2">
    <location>
        <position position="398"/>
    </location>
    <ligand>
        <name>thiamine diphosphate</name>
        <dbReference type="ChEBI" id="CHEBI:58937"/>
    </ligand>
</feature>
<feature type="binding site" evidence="2">
    <location>
        <begin position="421"/>
        <end position="423"/>
    </location>
    <ligand>
        <name>thiamine diphosphate</name>
        <dbReference type="ChEBI" id="CHEBI:58937"/>
    </ligand>
</feature>
<feature type="binding site" evidence="2">
    <location>
        <position position="451"/>
    </location>
    <ligand>
        <name>Mg(2+)</name>
        <dbReference type="ChEBI" id="CHEBI:18420"/>
    </ligand>
</feature>
<feature type="binding site" evidence="2">
    <location>
        <begin position="452"/>
        <end position="453"/>
    </location>
    <ligand>
        <name>thiamine diphosphate</name>
        <dbReference type="ChEBI" id="CHEBI:58937"/>
    </ligand>
</feature>
<feature type="binding site" evidence="2">
    <location>
        <begin position="478"/>
        <end position="483"/>
    </location>
    <ligand>
        <name>thiamine diphosphate</name>
        <dbReference type="ChEBI" id="CHEBI:58937"/>
    </ligand>
</feature>
<feature type="binding site" evidence="2">
    <location>
        <position position="478"/>
    </location>
    <ligand>
        <name>Mg(2+)</name>
        <dbReference type="ChEBI" id="CHEBI:18420"/>
    </ligand>
</feature>
<feature type="binding site" evidence="2">
    <location>
        <position position="480"/>
    </location>
    <ligand>
        <name>Mg(2+)</name>
        <dbReference type="ChEBI" id="CHEBI:18420"/>
    </ligand>
</feature>
<feature type="binding site" evidence="2">
    <location>
        <position position="484"/>
    </location>
    <ligand>
        <name>pyruvate</name>
        <dbReference type="ChEBI" id="CHEBI:15361"/>
        <note>ligand shared between two neighboring subunits</note>
    </ligand>
</feature>
<protein>
    <recommendedName>
        <fullName>Pyruvate decarboxylase</fullName>
        <ecNumber>4.1.1.1</ecNumber>
    </recommendedName>
</protein>
<accession>Q4WXX9</accession>
<name>PDC_ASPFU</name>
<gene>
    <name type="primary">pdcA</name>
    <name type="ORF">AFUA_3G11070</name>
</gene>
<dbReference type="EC" id="4.1.1.1"/>
<dbReference type="EMBL" id="AAHF01000002">
    <property type="protein sequence ID" value="EAL92474.1"/>
    <property type="molecule type" value="Genomic_DNA"/>
</dbReference>
<dbReference type="RefSeq" id="XP_754512.1">
    <property type="nucleotide sequence ID" value="XM_749419.1"/>
</dbReference>
<dbReference type="SMR" id="Q4WXX9"/>
<dbReference type="FunCoup" id="Q4WXX9">
    <property type="interactions" value="949"/>
</dbReference>
<dbReference type="STRING" id="330879.Q4WXX9"/>
<dbReference type="EnsemblFungi" id="EAL92474">
    <property type="protein sequence ID" value="EAL92474"/>
    <property type="gene ID" value="AFUA_3G11070"/>
</dbReference>
<dbReference type="GeneID" id="3511715"/>
<dbReference type="KEGG" id="afm:AFUA_3G11070"/>
<dbReference type="VEuPathDB" id="FungiDB:Afu3g11070"/>
<dbReference type="eggNOG" id="KOG1184">
    <property type="taxonomic scope" value="Eukaryota"/>
</dbReference>
<dbReference type="HOGENOM" id="CLU_013748_0_2_1"/>
<dbReference type="InParanoid" id="Q4WXX9"/>
<dbReference type="OMA" id="IHGPEQR"/>
<dbReference type="OrthoDB" id="3970464at2759"/>
<dbReference type="Proteomes" id="UP000002530">
    <property type="component" value="Chromosome 3"/>
</dbReference>
<dbReference type="GO" id="GO:0005829">
    <property type="term" value="C:cytosol"/>
    <property type="evidence" value="ECO:0000318"/>
    <property type="project" value="GO_Central"/>
</dbReference>
<dbReference type="GO" id="GO:0005634">
    <property type="term" value="C:nucleus"/>
    <property type="evidence" value="ECO:0000318"/>
    <property type="project" value="GO_Central"/>
</dbReference>
<dbReference type="GO" id="GO:0000287">
    <property type="term" value="F:magnesium ion binding"/>
    <property type="evidence" value="ECO:0007669"/>
    <property type="project" value="InterPro"/>
</dbReference>
<dbReference type="GO" id="GO:0004737">
    <property type="term" value="F:pyruvate decarboxylase activity"/>
    <property type="evidence" value="ECO:0000318"/>
    <property type="project" value="GO_Central"/>
</dbReference>
<dbReference type="GO" id="GO:0030976">
    <property type="term" value="F:thiamine pyrophosphate binding"/>
    <property type="evidence" value="ECO:0007669"/>
    <property type="project" value="InterPro"/>
</dbReference>
<dbReference type="GO" id="GO:0000949">
    <property type="term" value="P:aromatic amino acid family catabolic process to alcohol via Ehrlich pathway"/>
    <property type="evidence" value="ECO:0000318"/>
    <property type="project" value="GO_Central"/>
</dbReference>
<dbReference type="GO" id="GO:0019655">
    <property type="term" value="P:glycolytic fermentation to ethanol"/>
    <property type="evidence" value="ECO:0000315"/>
    <property type="project" value="AspGD"/>
</dbReference>
<dbReference type="CDD" id="cd02005">
    <property type="entry name" value="TPP_PDC_IPDC"/>
    <property type="match status" value="1"/>
</dbReference>
<dbReference type="CDD" id="cd07038">
    <property type="entry name" value="TPP_PYR_PDC_IPDC_like"/>
    <property type="match status" value="1"/>
</dbReference>
<dbReference type="FunFam" id="3.40.50.1220:FF:000025">
    <property type="entry name" value="Pyruvate decarboxylase"/>
    <property type="match status" value="1"/>
</dbReference>
<dbReference type="FunFam" id="3.40.50.970:FF:000019">
    <property type="entry name" value="Pyruvate decarboxylase isozyme"/>
    <property type="match status" value="1"/>
</dbReference>
<dbReference type="FunFam" id="3.40.50.970:FF:000024">
    <property type="entry name" value="Pyruvate decarboxylase isozyme"/>
    <property type="match status" value="1"/>
</dbReference>
<dbReference type="Gene3D" id="3.40.50.970">
    <property type="match status" value="2"/>
</dbReference>
<dbReference type="Gene3D" id="3.40.50.1220">
    <property type="entry name" value="TPP-binding domain"/>
    <property type="match status" value="1"/>
</dbReference>
<dbReference type="InterPro" id="IPR029035">
    <property type="entry name" value="DHS-like_NAD/FAD-binding_dom"/>
</dbReference>
<dbReference type="InterPro" id="IPR012110">
    <property type="entry name" value="PDC/IPDC-like"/>
</dbReference>
<dbReference type="InterPro" id="IPR029061">
    <property type="entry name" value="THDP-binding"/>
</dbReference>
<dbReference type="InterPro" id="IPR012000">
    <property type="entry name" value="Thiamin_PyroP_enz_cen_dom"/>
</dbReference>
<dbReference type="InterPro" id="IPR012001">
    <property type="entry name" value="Thiamin_PyroP_enz_TPP-bd_dom"/>
</dbReference>
<dbReference type="InterPro" id="IPR011766">
    <property type="entry name" value="TPP_enzyme_TPP-bd"/>
</dbReference>
<dbReference type="InterPro" id="IPR047214">
    <property type="entry name" value="TPP_PDC_IPDC"/>
</dbReference>
<dbReference type="InterPro" id="IPR047213">
    <property type="entry name" value="TPP_PYR_PDC_IPDC-like"/>
</dbReference>
<dbReference type="PANTHER" id="PTHR43452">
    <property type="entry name" value="PYRUVATE DECARBOXYLASE"/>
    <property type="match status" value="1"/>
</dbReference>
<dbReference type="PANTHER" id="PTHR43452:SF30">
    <property type="entry name" value="PYRUVATE DECARBOXYLASE ISOZYME 1-RELATED"/>
    <property type="match status" value="1"/>
</dbReference>
<dbReference type="Pfam" id="PF02775">
    <property type="entry name" value="TPP_enzyme_C"/>
    <property type="match status" value="1"/>
</dbReference>
<dbReference type="Pfam" id="PF00205">
    <property type="entry name" value="TPP_enzyme_M"/>
    <property type="match status" value="1"/>
</dbReference>
<dbReference type="Pfam" id="PF02776">
    <property type="entry name" value="TPP_enzyme_N"/>
    <property type="match status" value="1"/>
</dbReference>
<dbReference type="PIRSF" id="PIRSF036565">
    <property type="entry name" value="Pyruvt_ip_decrb"/>
    <property type="match status" value="1"/>
</dbReference>
<dbReference type="SUPFAM" id="SSF52467">
    <property type="entry name" value="DHS-like NAD/FAD-binding domain"/>
    <property type="match status" value="1"/>
</dbReference>
<dbReference type="SUPFAM" id="SSF52518">
    <property type="entry name" value="Thiamin diphosphate-binding fold (THDP-binding)"/>
    <property type="match status" value="2"/>
</dbReference>
<comment type="catalytic activity">
    <reaction>
        <text>a 2-oxocarboxylate + H(+) = an aldehyde + CO2</text>
        <dbReference type="Rhea" id="RHEA:11628"/>
        <dbReference type="ChEBI" id="CHEBI:15378"/>
        <dbReference type="ChEBI" id="CHEBI:16526"/>
        <dbReference type="ChEBI" id="CHEBI:17478"/>
        <dbReference type="ChEBI" id="CHEBI:35179"/>
        <dbReference type="EC" id="4.1.1.1"/>
    </reaction>
</comment>
<comment type="catalytic activity">
    <reaction evidence="2">
        <text>pyruvate + H(+) = acetaldehyde + CO2</text>
        <dbReference type="Rhea" id="RHEA:45484"/>
        <dbReference type="ChEBI" id="CHEBI:15343"/>
        <dbReference type="ChEBI" id="CHEBI:15361"/>
        <dbReference type="ChEBI" id="CHEBI:15378"/>
        <dbReference type="ChEBI" id="CHEBI:16526"/>
    </reaction>
</comment>
<comment type="cofactor">
    <cofactor evidence="2">
        <name>Mg(2+)</name>
        <dbReference type="ChEBI" id="CHEBI:18420"/>
    </cofactor>
    <text evidence="2">Binds 1 Mg(2+) per subunit.</text>
</comment>
<comment type="cofactor">
    <cofactor evidence="2">
        <name>thiamine diphosphate</name>
        <dbReference type="ChEBI" id="CHEBI:58937"/>
    </cofactor>
    <text evidence="2">Binds 1 thiamine pyrophosphate per subunit.</text>
</comment>
<comment type="subunit">
    <text evidence="1">Homotetramer.</text>
</comment>
<comment type="similarity">
    <text evidence="3">Belongs to the TPP enzyme family.</text>
</comment>
<organism>
    <name type="scientific">Aspergillus fumigatus (strain ATCC MYA-4609 / CBS 101355 / FGSC A1100 / Af293)</name>
    <name type="common">Neosartorya fumigata</name>
    <dbReference type="NCBI Taxonomy" id="330879"/>
    <lineage>
        <taxon>Eukaryota</taxon>
        <taxon>Fungi</taxon>
        <taxon>Dikarya</taxon>
        <taxon>Ascomycota</taxon>
        <taxon>Pezizomycotina</taxon>
        <taxon>Eurotiomycetes</taxon>
        <taxon>Eurotiomycetidae</taxon>
        <taxon>Eurotiales</taxon>
        <taxon>Aspergillaceae</taxon>
        <taxon>Aspergillus</taxon>
        <taxon>Aspergillus subgen. Fumigati</taxon>
    </lineage>
</organism>